<comment type="function">
    <text evidence="1">Catalyzes the formation of the alpha-1,6-glucosidic linkages in glycogen by scission of a 1,4-alpha-linked oligosaccharide from growing alpha-1,4-glucan chains and the subsequent attachment of the oligosaccharide to the alpha-1,6 position.</text>
</comment>
<comment type="catalytic activity">
    <reaction>
        <text>Transfers a segment of a (1-&gt;4)-alpha-D-glucan chain to a primary hydroxy group in a similar glucan chain.</text>
        <dbReference type="EC" id="2.4.1.18"/>
    </reaction>
</comment>
<comment type="pathway">
    <text>Glycan biosynthesis; glycogen biosynthesis.</text>
</comment>
<comment type="subunit">
    <text evidence="1">Monomer.</text>
</comment>
<comment type="similarity">
    <text evidence="2">Belongs to the glycosyl hydrolase 13 family. GlgB subfamily.</text>
</comment>
<sequence>MTGIGARTAWRNAVGRRPRNARRVSRIAYRVSRVACRVSRIAYRVSRIAYRVSRVAWRNVAPAARRAHRPFPAVIHIASGIPLPTEPLPAPPVVVDRPASPDDAALIAPDDLARLLRGEHDDPFAVLGIHAESSARDVVVRCLLPGAARVELIDAASARTLATLSPVGSGELHAIRLPAPGPLRYRLRAHYADTVRDLDDPYACTPWLGSLDCHLLARGEHRDAYRRLGAHPCVHDGLEGTAFALWAPNASCVSVVGSFNGWDARVHAMRKRIECGVWELFVPGVGCGALYKFALRTRDGDRLLKADPYARRTEAPPRTASRICAPSAFGWRDDAWMRERAAAQSAHAPIAIYEVHLDSWRRHPDGRAYSYDELADALIPYVAALGFTHVELLPIAEYPFAGSWGYQPVSLFAPSARWGEPDALRRFVERCHLAGLGVLLDWVPAHFPQDAHGLARFDGTHLYEHEDRRVGLHRGWNTLVYNLGRHEVANFLIANALYWLREFHFDGLRVDAVASMLYLDYDRDDGQWLPNVHGGRENLEAVAFLRRLNETVHADAPQGAITIAEESTAWPMVSAPVAAGGLGFDFKWNMGWMNDTLSFMRVDPIHRRFHLDRLTFGLLYAWSEQFVLALSHDEVVHAKGSLLAKMPGDAWQRHANLRLYLAFQYAHPGKKLLFMGSEFGQEREWNHDRELDWARLADPASAGVRRLVGDLNRLYRRRGCLHRRDADSRGFRWIDCADSHQTVIAWRRIGDAPDDFVVVVCNFTPQPRTGYRIGVPAAGFYRELLNSDAADYGGSGLGNLGGVSSEPVPMHGEPHSLSLLLPPLAALVFAAPGH</sequence>
<gene>
    <name type="primary">glgB</name>
    <name type="ordered locus">BTH_II0939</name>
</gene>
<feature type="chain" id="PRO_0000260640" description="1,4-alpha-glucan branching enzyme GlgB">
    <location>
        <begin position="1"/>
        <end position="834"/>
    </location>
</feature>
<feature type="active site" description="Nucleophile" evidence="1">
    <location>
        <position position="511"/>
    </location>
</feature>
<feature type="active site" description="Proton donor" evidence="1">
    <location>
        <position position="565"/>
    </location>
</feature>
<organism>
    <name type="scientific">Burkholderia thailandensis (strain ATCC 700388 / DSM 13276 / CCUG 48851 / CIP 106301 / E264)</name>
    <dbReference type="NCBI Taxonomy" id="271848"/>
    <lineage>
        <taxon>Bacteria</taxon>
        <taxon>Pseudomonadati</taxon>
        <taxon>Pseudomonadota</taxon>
        <taxon>Betaproteobacteria</taxon>
        <taxon>Burkholderiales</taxon>
        <taxon>Burkholderiaceae</taxon>
        <taxon>Burkholderia</taxon>
        <taxon>pseudomallei group</taxon>
    </lineage>
</organism>
<dbReference type="EC" id="2.4.1.18"/>
<dbReference type="EMBL" id="CP000085">
    <property type="protein sequence ID" value="ABC35639.1"/>
    <property type="molecule type" value="Genomic_DNA"/>
</dbReference>
<dbReference type="RefSeq" id="WP_009896323.1">
    <property type="nucleotide sequence ID" value="NC_007650.1"/>
</dbReference>
<dbReference type="SMR" id="Q2T6R3"/>
<dbReference type="CAZy" id="CBM48">
    <property type="family name" value="Carbohydrate-Binding Module Family 48"/>
</dbReference>
<dbReference type="CAZy" id="GH13">
    <property type="family name" value="Glycoside Hydrolase Family 13"/>
</dbReference>
<dbReference type="GeneID" id="45118413"/>
<dbReference type="KEGG" id="bte:BTH_II0939"/>
<dbReference type="HOGENOM" id="CLU_004245_3_2_4"/>
<dbReference type="BRENDA" id="2.4.1.18">
    <property type="organism ID" value="8156"/>
</dbReference>
<dbReference type="UniPathway" id="UPA00164"/>
<dbReference type="Proteomes" id="UP000001930">
    <property type="component" value="Chromosome II"/>
</dbReference>
<dbReference type="GO" id="GO:0005829">
    <property type="term" value="C:cytosol"/>
    <property type="evidence" value="ECO:0007669"/>
    <property type="project" value="TreeGrafter"/>
</dbReference>
<dbReference type="GO" id="GO:0003844">
    <property type="term" value="F:1,4-alpha-glucan branching enzyme activity"/>
    <property type="evidence" value="ECO:0007669"/>
    <property type="project" value="UniProtKB-UniRule"/>
</dbReference>
<dbReference type="GO" id="GO:0043169">
    <property type="term" value="F:cation binding"/>
    <property type="evidence" value="ECO:0007669"/>
    <property type="project" value="InterPro"/>
</dbReference>
<dbReference type="GO" id="GO:0004553">
    <property type="term" value="F:hydrolase activity, hydrolyzing O-glycosyl compounds"/>
    <property type="evidence" value="ECO:0007669"/>
    <property type="project" value="InterPro"/>
</dbReference>
<dbReference type="GO" id="GO:0005978">
    <property type="term" value="P:glycogen biosynthetic process"/>
    <property type="evidence" value="ECO:0007669"/>
    <property type="project" value="UniProtKB-UniRule"/>
</dbReference>
<dbReference type="CDD" id="cd11322">
    <property type="entry name" value="AmyAc_Glg_BE"/>
    <property type="match status" value="1"/>
</dbReference>
<dbReference type="CDD" id="cd02855">
    <property type="entry name" value="E_set_GBE_prok_N"/>
    <property type="match status" value="1"/>
</dbReference>
<dbReference type="FunFam" id="2.60.40.10:FF:000169">
    <property type="entry name" value="1,4-alpha-glucan branching enzyme GlgB"/>
    <property type="match status" value="1"/>
</dbReference>
<dbReference type="FunFam" id="2.60.40.1180:FF:000002">
    <property type="entry name" value="1,4-alpha-glucan branching enzyme GlgB"/>
    <property type="match status" value="1"/>
</dbReference>
<dbReference type="FunFam" id="3.20.20.80:FF:000003">
    <property type="entry name" value="1,4-alpha-glucan branching enzyme GlgB"/>
    <property type="match status" value="1"/>
</dbReference>
<dbReference type="Gene3D" id="3.20.20.80">
    <property type="entry name" value="Glycosidases"/>
    <property type="match status" value="1"/>
</dbReference>
<dbReference type="Gene3D" id="2.60.40.1180">
    <property type="entry name" value="Golgi alpha-mannosidase II"/>
    <property type="match status" value="1"/>
</dbReference>
<dbReference type="Gene3D" id="2.60.40.10">
    <property type="entry name" value="Immunoglobulins"/>
    <property type="match status" value="1"/>
</dbReference>
<dbReference type="HAMAP" id="MF_00685">
    <property type="entry name" value="GlgB"/>
    <property type="match status" value="1"/>
</dbReference>
<dbReference type="InterPro" id="IPR006048">
    <property type="entry name" value="A-amylase/branching_C"/>
</dbReference>
<dbReference type="InterPro" id="IPR037439">
    <property type="entry name" value="Branching_enzy"/>
</dbReference>
<dbReference type="InterPro" id="IPR006407">
    <property type="entry name" value="GlgB"/>
</dbReference>
<dbReference type="InterPro" id="IPR054169">
    <property type="entry name" value="GlgB_N"/>
</dbReference>
<dbReference type="InterPro" id="IPR044143">
    <property type="entry name" value="GlgB_N_E_set_prok"/>
</dbReference>
<dbReference type="InterPro" id="IPR006047">
    <property type="entry name" value="Glyco_hydro_13_cat_dom"/>
</dbReference>
<dbReference type="InterPro" id="IPR004193">
    <property type="entry name" value="Glyco_hydro_13_N"/>
</dbReference>
<dbReference type="InterPro" id="IPR013780">
    <property type="entry name" value="Glyco_hydro_b"/>
</dbReference>
<dbReference type="InterPro" id="IPR017853">
    <property type="entry name" value="Glycoside_hydrolase_SF"/>
</dbReference>
<dbReference type="InterPro" id="IPR013783">
    <property type="entry name" value="Ig-like_fold"/>
</dbReference>
<dbReference type="InterPro" id="IPR014756">
    <property type="entry name" value="Ig_E-set"/>
</dbReference>
<dbReference type="NCBIfam" id="TIGR01515">
    <property type="entry name" value="branching_enzym"/>
    <property type="match status" value="1"/>
</dbReference>
<dbReference type="NCBIfam" id="NF003811">
    <property type="entry name" value="PRK05402.1"/>
    <property type="match status" value="1"/>
</dbReference>
<dbReference type="NCBIfam" id="NF008967">
    <property type="entry name" value="PRK12313.1"/>
    <property type="match status" value="1"/>
</dbReference>
<dbReference type="PANTHER" id="PTHR43651">
    <property type="entry name" value="1,4-ALPHA-GLUCAN-BRANCHING ENZYME"/>
    <property type="match status" value="1"/>
</dbReference>
<dbReference type="PANTHER" id="PTHR43651:SF3">
    <property type="entry name" value="1,4-ALPHA-GLUCAN-BRANCHING ENZYME"/>
    <property type="match status" value="1"/>
</dbReference>
<dbReference type="Pfam" id="PF02806">
    <property type="entry name" value="Alpha-amylase_C"/>
    <property type="match status" value="1"/>
</dbReference>
<dbReference type="Pfam" id="PF02922">
    <property type="entry name" value="CBM_48"/>
    <property type="match status" value="1"/>
</dbReference>
<dbReference type="Pfam" id="PF22019">
    <property type="entry name" value="GlgB_N"/>
    <property type="match status" value="1"/>
</dbReference>
<dbReference type="PIRSF" id="PIRSF000463">
    <property type="entry name" value="GlgB"/>
    <property type="match status" value="1"/>
</dbReference>
<dbReference type="SMART" id="SM00642">
    <property type="entry name" value="Aamy"/>
    <property type="match status" value="1"/>
</dbReference>
<dbReference type="SUPFAM" id="SSF51445">
    <property type="entry name" value="(Trans)glycosidases"/>
    <property type="match status" value="1"/>
</dbReference>
<dbReference type="SUPFAM" id="SSF81296">
    <property type="entry name" value="E set domains"/>
    <property type="match status" value="1"/>
</dbReference>
<dbReference type="SUPFAM" id="SSF51011">
    <property type="entry name" value="Glycosyl hydrolase domain"/>
    <property type="match status" value="1"/>
</dbReference>
<name>GLGB_BURTA</name>
<reference key="1">
    <citation type="journal article" date="2005" name="BMC Genomics">
        <title>Bacterial genome adaptation to niches: divergence of the potential virulence genes in three Burkholderia species of different survival strategies.</title>
        <authorList>
            <person name="Kim H.S."/>
            <person name="Schell M.A."/>
            <person name="Yu Y."/>
            <person name="Ulrich R.L."/>
            <person name="Sarria S.H."/>
            <person name="Nierman W.C."/>
            <person name="DeShazer D."/>
        </authorList>
    </citation>
    <scope>NUCLEOTIDE SEQUENCE [LARGE SCALE GENOMIC DNA]</scope>
    <source>
        <strain>ATCC 700388 / DSM 13276 / CCUG 48851 / CIP 106301 / E264</strain>
    </source>
</reference>
<accession>Q2T6R3</accession>
<protein>
    <recommendedName>
        <fullName>1,4-alpha-glucan branching enzyme GlgB</fullName>
        <ecNumber>2.4.1.18</ecNumber>
    </recommendedName>
    <alternativeName>
        <fullName>1,4-alpha-D-glucan:1,4-alpha-D-glucan 6-glucosyl-transferase</fullName>
    </alternativeName>
    <alternativeName>
        <fullName>Alpha-(1-&gt;4)-glucan branching enzyme</fullName>
    </alternativeName>
    <alternativeName>
        <fullName>Glycogen branching enzyme</fullName>
        <shortName>BE</shortName>
    </alternativeName>
</protein>
<proteinExistence type="inferred from homology"/>
<evidence type="ECO:0000250" key="1"/>
<evidence type="ECO:0000305" key="2"/>
<keyword id="KW-0119">Carbohydrate metabolism</keyword>
<keyword id="KW-0320">Glycogen biosynthesis</keyword>
<keyword id="KW-0321">Glycogen metabolism</keyword>
<keyword id="KW-0328">Glycosyltransferase</keyword>
<keyword id="KW-0808">Transferase</keyword>